<proteinExistence type="inferred from homology"/>
<comment type="function">
    <molecule>Protein hedgehog</molecule>
    <text evidence="1 3">The C-terminal part of the hedgehog protein precursor displays an autoproteolysis activity that results in the cleavage of the full-length protein into two parts (N-product and C-product) (By similarity). In addition, the C-terminal part displays a cholesterol transferase activity that results by the covalent attachment of a cholesterol moiety to the C-terminal of the newly generated N-product (By similarity). Once cleaved, the C-product has no signaling activity and diffuses from the cell (By similarity).</text>
</comment>
<comment type="function">
    <molecule>Protein hedgehog N-product</molecule>
    <text evidence="1">The dually lipidated hedgehog protein N-product is a morphogen which is essential for a variety of patterning events during development. Establishes the anterior-posterior axis of the embryonic segments and patterns the larval imaginal disks. Binds to the patched (ptc) receptor, which functions in association with smoothened (smo), to activate the transcription of target genes wingless (wg), decapentaplegic (dpp) and ptc. In the absence of hh, ptc represses the constitutive signaling activity of smo through fused (fu). Essential component of a signaling pathway which regulates the Duox-dependent gut immune response to bacterial uracil; required to activate Cad99C-dependent endosome formation, norpA-dependent Ca2+ mobilization and p38 MAPK, which are essential steps in the Duox-dependent production of reactive oxygen species (ROS) in response to intestinal bacterial infection. During photoreceptor differentiation, it up-regulates transcription of Ubr3, which in turn promotes the hh-signaling pathway by mediating the ubiquitination and degradation of cos.</text>
</comment>
<comment type="catalytic activity">
    <molecule>Protein hedgehog</molecule>
    <reaction evidence="3">
        <text>glycyl-L-cysteinyl-[protein] + cholesterol + H(+) = [protein]-C-terminal glycyl cholesterol ester + N-terminal L-cysteinyl-[protein]</text>
        <dbReference type="Rhea" id="RHEA:59504"/>
        <dbReference type="Rhea" id="RHEA-COMP:12707"/>
        <dbReference type="Rhea" id="RHEA-COMP:15369"/>
        <dbReference type="Rhea" id="RHEA-COMP:15374"/>
        <dbReference type="ChEBI" id="CHEBI:15378"/>
        <dbReference type="ChEBI" id="CHEBI:16113"/>
        <dbReference type="ChEBI" id="CHEBI:65250"/>
        <dbReference type="ChEBI" id="CHEBI:143135"/>
        <dbReference type="ChEBI" id="CHEBI:143140"/>
    </reaction>
    <physiologicalReaction direction="left-to-right" evidence="3">
        <dbReference type="Rhea" id="RHEA:59505"/>
    </physiologicalReaction>
</comment>
<comment type="subunit">
    <text evidence="1">Interacts with shf.</text>
</comment>
<comment type="subcellular location">
    <subcellularLocation>
        <location evidence="1">Nucleus</location>
    </subcellularLocation>
    <subcellularLocation>
        <location evidence="1">Cytoplasm</location>
    </subcellularLocation>
    <text evidence="1">Nuclear up to embryonic stage 10 and then at stage 11 shifts to the cytoplasm. Also secreted in either cleaved or uncleaved form to mediate signaling to other cells.</text>
</comment>
<comment type="subcellular location">
    <molecule>Protein hedgehog N-product</molecule>
    <subcellularLocation>
        <location evidence="1">Cell membrane</location>
        <topology evidence="1">Lipid-anchor</topology>
    </subcellularLocation>
    <text evidence="1">The N-terminal peptide remains associated with the cell surface. Heparan sulfate proteoglycans of the extracellular matrix play an essential role in diffusion. Lipophorin is required for diffusion, probably by acting as vehicle for its movement, explaining how it can spread over long distances despite its lipidation.</text>
</comment>
<comment type="PTM">
    <molecule>Protein hedgehog</molecule>
    <text evidence="1 2 3">The C-terminal part of the hedgehog protein precursor displays an autoproteolysis activity that results in the cleavage of the full-length protein into two parts (N-product and C-product) (By similarity). In addition, the C-terminal part displays a cholesterol transferase activity that results by the covalent attachment of a cholesterol moiety to the C-terminal of the newly generated N-product (By similarity). The N-product is the active species in both local and long-range signaling, whereas the C-product has no signaling activity (By similarity).</text>
</comment>
<comment type="PTM">
    <molecule>Protein hedgehog N-product</molecule>
    <text evidence="3">Cholesterylation is required for N-product targeting to lipid rafts and multimerization.</text>
</comment>
<comment type="PTM">
    <molecule>Protein hedgehog N-product</molecule>
    <text evidence="1">N-palmitoylation by Rasp of the hedgehog N-product, within the secretory pathway, is required for the embryonic and larval patterning activities of the hedgehog signal.</text>
</comment>
<comment type="similarity">
    <text evidence="4">Belongs to the hedgehog family.</text>
</comment>
<protein>
    <recommendedName>
        <fullName evidence="1">Protein hedgehog</fullName>
        <ecNumber evidence="3">3.1.-.-</ecNumber>
    </recommendedName>
    <component>
        <recommendedName>
            <fullName evidence="1">Protein hedgehog N-product</fullName>
        </recommendedName>
    </component>
</protein>
<keyword id="KW-0068">Autocatalytic cleavage</keyword>
<keyword id="KW-0106">Calcium</keyword>
<keyword id="KW-1003">Cell membrane</keyword>
<keyword id="KW-0963">Cytoplasm</keyword>
<keyword id="KW-0217">Developmental protein</keyword>
<keyword id="KW-0378">Hydrolase</keyword>
<keyword id="KW-0449">Lipoprotein</keyword>
<keyword id="KW-0472">Membrane</keyword>
<keyword id="KW-0479">Metal-binding</keyword>
<keyword id="KW-0504">Morphogen</keyword>
<keyword id="KW-0539">Nucleus</keyword>
<keyword id="KW-0564">Palmitate</keyword>
<keyword id="KW-0645">Protease</keyword>
<keyword id="KW-1185">Reference proteome</keyword>
<keyword id="KW-0709">Segmentation polarity protein</keyword>
<keyword id="KW-0732">Signal</keyword>
<keyword id="KW-0808">Transferase</keyword>
<organism>
    <name type="scientific">Drosophila simulans</name>
    <name type="common">Fruit fly</name>
    <dbReference type="NCBI Taxonomy" id="7240"/>
    <lineage>
        <taxon>Eukaryota</taxon>
        <taxon>Metazoa</taxon>
        <taxon>Ecdysozoa</taxon>
        <taxon>Arthropoda</taxon>
        <taxon>Hexapoda</taxon>
        <taxon>Insecta</taxon>
        <taxon>Pterygota</taxon>
        <taxon>Neoptera</taxon>
        <taxon>Endopterygota</taxon>
        <taxon>Diptera</taxon>
        <taxon>Brachycera</taxon>
        <taxon>Muscomorpha</taxon>
        <taxon>Ephydroidea</taxon>
        <taxon>Drosophilidae</taxon>
        <taxon>Drosophila</taxon>
        <taxon>Sophophora</taxon>
    </lineage>
</organism>
<dbReference type="EC" id="3.1.-.-" evidence="3"/>
<dbReference type="EMBL" id="CM000364">
    <property type="protein sequence ID" value="EDX14024.1"/>
    <property type="molecule type" value="Genomic_DNA"/>
</dbReference>
<dbReference type="SMR" id="B4R1D8"/>
<dbReference type="STRING" id="7240.B4R1D8"/>
<dbReference type="HOGENOM" id="CLU_034686_0_0_1"/>
<dbReference type="OMA" id="QTDGLHW"/>
<dbReference type="OrthoDB" id="5212at2759"/>
<dbReference type="PhylomeDB" id="B4R1D8"/>
<dbReference type="Proteomes" id="UP000000304">
    <property type="component" value="Chromosome 3R"/>
</dbReference>
<dbReference type="GO" id="GO:0030139">
    <property type="term" value="C:endocytic vesicle"/>
    <property type="evidence" value="ECO:0007669"/>
    <property type="project" value="EnsemblMetazoa"/>
</dbReference>
<dbReference type="GO" id="GO:0005768">
    <property type="term" value="C:endosome"/>
    <property type="evidence" value="ECO:0007669"/>
    <property type="project" value="EnsemblMetazoa"/>
</dbReference>
<dbReference type="GO" id="GO:0005615">
    <property type="term" value="C:extracellular space"/>
    <property type="evidence" value="ECO:0007669"/>
    <property type="project" value="EnsemblMetazoa"/>
</dbReference>
<dbReference type="GO" id="GO:0005634">
    <property type="term" value="C:nucleus"/>
    <property type="evidence" value="ECO:0007669"/>
    <property type="project" value="UniProtKB-SubCell"/>
</dbReference>
<dbReference type="GO" id="GO:0005886">
    <property type="term" value="C:plasma membrane"/>
    <property type="evidence" value="ECO:0007669"/>
    <property type="project" value="UniProtKB-SubCell"/>
</dbReference>
<dbReference type="GO" id="GO:0005509">
    <property type="term" value="F:calcium ion binding"/>
    <property type="evidence" value="ECO:0007669"/>
    <property type="project" value="TreeGrafter"/>
</dbReference>
<dbReference type="GO" id="GO:0140853">
    <property type="term" value="F:cholesterol-protein transferase activity"/>
    <property type="evidence" value="ECO:0000250"/>
    <property type="project" value="UniProtKB"/>
</dbReference>
<dbReference type="GO" id="GO:0016015">
    <property type="term" value="F:morphogen activity"/>
    <property type="evidence" value="ECO:0007669"/>
    <property type="project" value="UniProtKB-KW"/>
</dbReference>
<dbReference type="GO" id="GO:0005113">
    <property type="term" value="F:patched binding"/>
    <property type="evidence" value="ECO:0007669"/>
    <property type="project" value="EnsemblMetazoa"/>
</dbReference>
<dbReference type="GO" id="GO:0008233">
    <property type="term" value="F:peptidase activity"/>
    <property type="evidence" value="ECO:0000250"/>
    <property type="project" value="UniProtKB"/>
</dbReference>
<dbReference type="GO" id="GO:0001746">
    <property type="term" value="P:Bolwig's organ morphogenesis"/>
    <property type="evidence" value="ECO:0007669"/>
    <property type="project" value="EnsemblMetazoa"/>
</dbReference>
<dbReference type="GO" id="GO:0007267">
    <property type="term" value="P:cell-cell signaling"/>
    <property type="evidence" value="ECO:0007669"/>
    <property type="project" value="InterPro"/>
</dbReference>
<dbReference type="GO" id="GO:0035231">
    <property type="term" value="P:cytoneme assembly"/>
    <property type="evidence" value="ECO:0007669"/>
    <property type="project" value="EnsemblMetazoa"/>
</dbReference>
<dbReference type="GO" id="GO:0007427">
    <property type="term" value="P:epithelial cell migration, open tracheal system"/>
    <property type="evidence" value="ECO:0007669"/>
    <property type="project" value="EnsemblMetazoa"/>
</dbReference>
<dbReference type="GO" id="GO:0035224">
    <property type="term" value="P:genital disc anterior/posterior pattern formation"/>
    <property type="evidence" value="ECO:0007669"/>
    <property type="project" value="EnsemblMetazoa"/>
</dbReference>
<dbReference type="GO" id="GO:0008354">
    <property type="term" value="P:germ cell migration"/>
    <property type="evidence" value="ECO:0007669"/>
    <property type="project" value="EnsemblMetazoa"/>
</dbReference>
<dbReference type="GO" id="GO:0008347">
    <property type="term" value="P:glial cell migration"/>
    <property type="evidence" value="ECO:0007669"/>
    <property type="project" value="EnsemblMetazoa"/>
</dbReference>
<dbReference type="GO" id="GO:0007506">
    <property type="term" value="P:gonadal mesoderm development"/>
    <property type="evidence" value="ECO:0007669"/>
    <property type="project" value="EnsemblMetazoa"/>
</dbReference>
<dbReference type="GO" id="GO:0007442">
    <property type="term" value="P:hindgut morphogenesis"/>
    <property type="evidence" value="ECO:0007669"/>
    <property type="project" value="EnsemblMetazoa"/>
</dbReference>
<dbReference type="GO" id="GO:0007476">
    <property type="term" value="P:imaginal disc-derived wing morphogenesis"/>
    <property type="evidence" value="ECO:0007669"/>
    <property type="project" value="EnsemblMetazoa"/>
</dbReference>
<dbReference type="GO" id="GO:0016539">
    <property type="term" value="P:intein-mediated protein splicing"/>
    <property type="evidence" value="ECO:0007669"/>
    <property type="project" value="InterPro"/>
</dbReference>
<dbReference type="GO" id="GO:0035217">
    <property type="term" value="P:labial disc development"/>
    <property type="evidence" value="ECO:0007669"/>
    <property type="project" value="EnsemblMetazoa"/>
</dbReference>
<dbReference type="GO" id="GO:0016335">
    <property type="term" value="P:morphogenesis of larval imaginal disc epithelium"/>
    <property type="evidence" value="ECO:0007669"/>
    <property type="project" value="EnsemblMetazoa"/>
</dbReference>
<dbReference type="GO" id="GO:0002385">
    <property type="term" value="P:mucosal immune response"/>
    <property type="evidence" value="ECO:0007669"/>
    <property type="project" value="EnsemblMetazoa"/>
</dbReference>
<dbReference type="GO" id="GO:0034111">
    <property type="term" value="P:negative regulation of homotypic cell-cell adhesion"/>
    <property type="evidence" value="ECO:0007669"/>
    <property type="project" value="EnsemblMetazoa"/>
</dbReference>
<dbReference type="GO" id="GO:0045861">
    <property type="term" value="P:negative regulation of proteolysis"/>
    <property type="evidence" value="ECO:0007669"/>
    <property type="project" value="EnsemblMetazoa"/>
</dbReference>
<dbReference type="GO" id="GO:0002052">
    <property type="term" value="P:positive regulation of neuroblast proliferation"/>
    <property type="evidence" value="ECO:0007669"/>
    <property type="project" value="EnsemblMetazoa"/>
</dbReference>
<dbReference type="GO" id="GO:2000010">
    <property type="term" value="P:positive regulation of protein localization to cell surface"/>
    <property type="evidence" value="ECO:0007669"/>
    <property type="project" value="EnsemblMetazoa"/>
</dbReference>
<dbReference type="GO" id="GO:0007458">
    <property type="term" value="P:progression of morphogenetic furrow involved in compound eye morphogenesis"/>
    <property type="evidence" value="ECO:0007669"/>
    <property type="project" value="EnsemblMetazoa"/>
</dbReference>
<dbReference type="GO" id="GO:0016540">
    <property type="term" value="P:protein autoprocessing"/>
    <property type="evidence" value="ECO:0007669"/>
    <property type="project" value="EnsemblMetazoa"/>
</dbReference>
<dbReference type="GO" id="GO:2000495">
    <property type="term" value="P:regulation of cell proliferation involved in compound eye morphogenesis"/>
    <property type="evidence" value="ECO:0007669"/>
    <property type="project" value="EnsemblMetazoa"/>
</dbReference>
<dbReference type="GO" id="GO:2000274">
    <property type="term" value="P:regulation of epithelial cell migration, open tracheal system"/>
    <property type="evidence" value="ECO:0007669"/>
    <property type="project" value="EnsemblMetazoa"/>
</dbReference>
<dbReference type="GO" id="GO:0010468">
    <property type="term" value="P:regulation of gene expression"/>
    <property type="evidence" value="ECO:0007669"/>
    <property type="project" value="TreeGrafter"/>
</dbReference>
<dbReference type="GO" id="GO:0007346">
    <property type="term" value="P:regulation of mitotic cell cycle"/>
    <property type="evidence" value="ECO:0007669"/>
    <property type="project" value="EnsemblMetazoa"/>
</dbReference>
<dbReference type="GO" id="GO:0007367">
    <property type="term" value="P:segment polarity determination"/>
    <property type="evidence" value="ECO:0000250"/>
    <property type="project" value="UniProtKB"/>
</dbReference>
<dbReference type="GO" id="GO:0097264">
    <property type="term" value="P:self proteolysis"/>
    <property type="evidence" value="ECO:0000250"/>
    <property type="project" value="UniProtKB"/>
</dbReference>
<dbReference type="GO" id="GO:0007224">
    <property type="term" value="P:smoothened signaling pathway"/>
    <property type="evidence" value="ECO:0007669"/>
    <property type="project" value="EnsemblMetazoa"/>
</dbReference>
<dbReference type="GO" id="GO:0035277">
    <property type="term" value="P:spiracle morphogenesis, open tracheal system"/>
    <property type="evidence" value="ECO:0007669"/>
    <property type="project" value="EnsemblMetazoa"/>
</dbReference>
<dbReference type="GO" id="GO:0035154">
    <property type="term" value="P:terminal cell fate specification, open tracheal system"/>
    <property type="evidence" value="ECO:0007669"/>
    <property type="project" value="EnsemblMetazoa"/>
</dbReference>
<dbReference type="GO" id="GO:0007418">
    <property type="term" value="P:ventral midline development"/>
    <property type="evidence" value="ECO:0007669"/>
    <property type="project" value="EnsemblMetazoa"/>
</dbReference>
<dbReference type="GO" id="GO:0035222">
    <property type="term" value="P:wing disc pattern formation"/>
    <property type="evidence" value="ECO:0007669"/>
    <property type="project" value="EnsemblMetazoa"/>
</dbReference>
<dbReference type="CDD" id="cd00081">
    <property type="entry name" value="Hint"/>
    <property type="match status" value="1"/>
</dbReference>
<dbReference type="FunFam" id="3.30.1380.10:FF:000001">
    <property type="entry name" value="Indian hedgehog"/>
    <property type="match status" value="1"/>
</dbReference>
<dbReference type="Gene3D" id="3.30.1380.10">
    <property type="match status" value="1"/>
</dbReference>
<dbReference type="Gene3D" id="2.170.16.10">
    <property type="entry name" value="Hedgehog/Intein (Hint) domain"/>
    <property type="match status" value="1"/>
</dbReference>
<dbReference type="InterPro" id="IPR001657">
    <property type="entry name" value="Hedgehog"/>
</dbReference>
<dbReference type="InterPro" id="IPR001767">
    <property type="entry name" value="Hedgehog_Hint"/>
</dbReference>
<dbReference type="InterPro" id="IPR009045">
    <property type="entry name" value="Hedgehog_sig/DD-Pept_Zn-bd_sf"/>
</dbReference>
<dbReference type="InterPro" id="IPR050387">
    <property type="entry name" value="Hedgehog_Signaling"/>
</dbReference>
<dbReference type="InterPro" id="IPR000320">
    <property type="entry name" value="Hedgehog_signalling_dom"/>
</dbReference>
<dbReference type="InterPro" id="IPR003587">
    <property type="entry name" value="Hint_dom_N"/>
</dbReference>
<dbReference type="InterPro" id="IPR036844">
    <property type="entry name" value="Hint_dom_sf"/>
</dbReference>
<dbReference type="InterPro" id="IPR006141">
    <property type="entry name" value="Intein_N"/>
</dbReference>
<dbReference type="PANTHER" id="PTHR11889">
    <property type="entry name" value="HEDGEHOG"/>
    <property type="match status" value="1"/>
</dbReference>
<dbReference type="PANTHER" id="PTHR11889:SF31">
    <property type="entry name" value="PROTEIN HEDGEHOG"/>
    <property type="match status" value="1"/>
</dbReference>
<dbReference type="Pfam" id="PF01085">
    <property type="entry name" value="HH_signal"/>
    <property type="match status" value="1"/>
</dbReference>
<dbReference type="Pfam" id="PF01079">
    <property type="entry name" value="Hint"/>
    <property type="match status" value="1"/>
</dbReference>
<dbReference type="PRINTS" id="PR00632">
    <property type="entry name" value="SONICHHOG"/>
</dbReference>
<dbReference type="SMART" id="SM00306">
    <property type="entry name" value="HintN"/>
    <property type="match status" value="1"/>
</dbReference>
<dbReference type="SUPFAM" id="SSF55166">
    <property type="entry name" value="Hedgehog/DD-peptidase"/>
    <property type="match status" value="1"/>
</dbReference>
<dbReference type="SUPFAM" id="SSF51294">
    <property type="entry name" value="Hedgehog/intein (Hint) domain"/>
    <property type="match status" value="1"/>
</dbReference>
<dbReference type="PROSITE" id="PS50817">
    <property type="entry name" value="INTEIN_N_TER"/>
    <property type="match status" value="1"/>
</dbReference>
<feature type="signal peptide" evidence="4">
    <location>
        <begin position="1"/>
        <end position="26"/>
    </location>
</feature>
<feature type="propeptide" id="PRO_0000383078" evidence="4">
    <location>
        <begin position="27"/>
        <end position="82"/>
    </location>
</feature>
<feature type="chain" id="PRO_0000383079" description="Protein hedgehog" evidence="1">
    <location>
        <begin position="83"/>
        <end position="395"/>
    </location>
</feature>
<feature type="chain" id="PRO_0000383080" description="Protein hedgehog N-product" evidence="1">
    <location>
        <begin position="83"/>
        <end position="255"/>
    </location>
</feature>
<feature type="region of interest" description="Disordered" evidence="5">
    <location>
        <begin position="26"/>
        <end position="46"/>
    </location>
</feature>
<feature type="compositionally biased region" description="Low complexity" evidence="5">
    <location>
        <begin position="26"/>
        <end position="43"/>
    </location>
</feature>
<feature type="binding site" evidence="2">
    <location>
        <position position="147"/>
    </location>
    <ligand>
        <name>Ca(2+)</name>
        <dbReference type="ChEBI" id="CHEBI:29108"/>
        <label>1</label>
    </ligand>
</feature>
<feature type="binding site" evidence="2">
    <location>
        <position position="148"/>
    </location>
    <ligand>
        <name>Ca(2+)</name>
        <dbReference type="ChEBI" id="CHEBI:29108"/>
        <label>1</label>
    </ligand>
</feature>
<feature type="binding site" evidence="2">
    <location>
        <position position="148"/>
    </location>
    <ligand>
        <name>Ca(2+)</name>
        <dbReference type="ChEBI" id="CHEBI:29108"/>
        <label>2</label>
    </ligand>
</feature>
<feature type="binding site" evidence="2">
    <location>
        <position position="153"/>
    </location>
    <ligand>
        <name>Ca(2+)</name>
        <dbReference type="ChEBI" id="CHEBI:29108"/>
        <label>1</label>
    </ligand>
</feature>
<feature type="binding site" evidence="2">
    <location>
        <position position="183"/>
    </location>
    <ligand>
        <name>Ca(2+)</name>
        <dbReference type="ChEBI" id="CHEBI:29108"/>
        <label>1</label>
    </ligand>
</feature>
<feature type="binding site" evidence="2">
    <location>
        <position position="184"/>
    </location>
    <ligand>
        <name>Ca(2+)</name>
        <dbReference type="ChEBI" id="CHEBI:29108"/>
        <label>1</label>
    </ligand>
</feature>
<feature type="binding site" evidence="2">
    <location>
        <position position="184"/>
    </location>
    <ligand>
        <name>Ca(2+)</name>
        <dbReference type="ChEBI" id="CHEBI:29108"/>
        <label>2</label>
    </ligand>
</feature>
<feature type="binding site" evidence="2">
    <location>
        <position position="187"/>
    </location>
    <ligand>
        <name>Ca(2+)</name>
        <dbReference type="ChEBI" id="CHEBI:29108"/>
        <label>2</label>
    </ligand>
</feature>
<feature type="binding site" evidence="2">
    <location>
        <position position="189"/>
    </location>
    <ligand>
        <name>Ca(2+)</name>
        <dbReference type="ChEBI" id="CHEBI:29108"/>
        <label>2</label>
    </ligand>
</feature>
<feature type="site" description="Cleavage; by autolysis" evidence="1">
    <location>
        <begin position="255"/>
        <end position="256"/>
    </location>
</feature>
<feature type="site" description="Involved in cholesterol transfer" evidence="1">
    <location>
        <position position="301"/>
    </location>
</feature>
<feature type="site" description="Involved in auto-cleavage" evidence="1">
    <location>
        <position position="324"/>
    </location>
</feature>
<feature type="site" description="Essential for auto-cleavage" evidence="1">
    <location>
        <position position="327"/>
    </location>
</feature>
<feature type="lipid moiety-binding region" description="N-palmitoyl cysteine" evidence="1">
    <location>
        <position position="83"/>
    </location>
</feature>
<feature type="lipid moiety-binding region" description="Cholesterol glycine ester" evidence="1">
    <location>
        <position position="255"/>
    </location>
</feature>
<accession>B4R1D8</accession>
<sequence length="395" mass="43913">MDNHSSVPWASAASVTCLSLDAKCHSSSSSCSSKSTASSISASPETQTMRHIAHTQRCLSRLTSLVALLLIVLPMMFSPAHSCGPGRGLGRHRARNLYPLVLKQTIPNLSEYTNSASGPLEGVIRRDSPKFKDLVPNYNRDILFRDEEGTGADRLMSKRCKEKLNVLAYSVMNEWPGIRLLVTESWDEDYHHGQESLHYEGRAVTIATSDRDQSKYGMLARLAVEAGFDWVSYVSRRHIYCSVKSDSSISSHVHGCFTPESTALLESGVRKPLGELSIGDRVLSMTANGQGVYSEVILFMDRNLEQMQNFVQLHTDGGAVLTVTPAHLVSVWQPESQKLTFVFADRIEESTFFLLRDGQSGGGGEKQVQQNGIHWYANALYKVKDYVLPQSWRHD</sequence>
<name>HH_DROSI</name>
<gene>
    <name evidence="1" type="primary">hh</name>
    <name type="ORF">GD18403</name>
</gene>
<evidence type="ECO:0000250" key="1">
    <source>
        <dbReference type="UniProtKB" id="Q02936"/>
    </source>
</evidence>
<evidence type="ECO:0000250" key="2">
    <source>
        <dbReference type="UniProtKB" id="Q15465"/>
    </source>
</evidence>
<evidence type="ECO:0000250" key="3">
    <source>
        <dbReference type="UniProtKB" id="Q62226"/>
    </source>
</evidence>
<evidence type="ECO:0000255" key="4"/>
<evidence type="ECO:0000256" key="5">
    <source>
        <dbReference type="SAM" id="MobiDB-lite"/>
    </source>
</evidence>
<evidence type="ECO:0000312" key="6">
    <source>
        <dbReference type="EMBL" id="EDX14024.1"/>
    </source>
</evidence>
<reference evidence="6" key="1">
    <citation type="journal article" date="2007" name="Nature">
        <title>Evolution of genes and genomes on the Drosophila phylogeny.</title>
        <authorList>
            <consortium name="Drosophila 12 genomes consortium"/>
        </authorList>
    </citation>
    <scope>NUCLEOTIDE SEQUENCE [LARGE SCALE GENOMIC DNA]</scope>
</reference>